<keyword id="KW-0002">3D-structure</keyword>
<keyword id="KW-0938">Abscisic acid signaling pathway</keyword>
<keyword id="KW-0025">Alternative splicing</keyword>
<keyword id="KW-1015">Disulfide bond</keyword>
<keyword id="KW-0378">Hydrolase</keyword>
<keyword id="KW-0460">Magnesium</keyword>
<keyword id="KW-0464">Manganese</keyword>
<keyword id="KW-0479">Metal-binding</keyword>
<keyword id="KW-0904">Protein phosphatase</keyword>
<keyword id="KW-1185">Reference proteome</keyword>
<dbReference type="EC" id="3.1.3.16" evidence="10"/>
<dbReference type="EMBL" id="Y08966">
    <property type="protein sequence ID" value="CAA70163.1"/>
    <property type="molecule type" value="Genomic_DNA"/>
</dbReference>
<dbReference type="EMBL" id="Y08965">
    <property type="protein sequence ID" value="CAA70162.1"/>
    <property type="molecule type" value="mRNA"/>
</dbReference>
<dbReference type="EMBL" id="Y11840">
    <property type="protein sequence ID" value="CAA72538.1"/>
    <property type="molecule type" value="Genomic_DNA"/>
</dbReference>
<dbReference type="EMBL" id="AB024035">
    <property type="protein sequence ID" value="BAA97035.1"/>
    <property type="molecule type" value="Genomic_DNA"/>
</dbReference>
<dbReference type="EMBL" id="CP002688">
    <property type="protein sequence ID" value="AED96839.1"/>
    <property type="molecule type" value="Genomic_DNA"/>
</dbReference>
<dbReference type="EMBL" id="CP002688">
    <property type="protein sequence ID" value="AED96840.1"/>
    <property type="molecule type" value="Genomic_DNA"/>
</dbReference>
<dbReference type="EMBL" id="AY136415">
    <property type="protein sequence ID" value="AAM97081.1"/>
    <property type="molecule type" value="mRNA"/>
</dbReference>
<dbReference type="EMBL" id="BT008860">
    <property type="protein sequence ID" value="AAP68299.1"/>
    <property type="molecule type" value="mRNA"/>
</dbReference>
<dbReference type="RefSeq" id="NP_001119448.1">
    <molecule id="O04719-2"/>
    <property type="nucleotide sequence ID" value="NM_001125976.2"/>
</dbReference>
<dbReference type="RefSeq" id="NP_200515.1">
    <molecule id="O04719-1"/>
    <property type="nucleotide sequence ID" value="NM_125087.3"/>
</dbReference>
<dbReference type="PDB" id="3NMV">
    <property type="method" value="X-ray"/>
    <property type="resolution" value="2.10 A"/>
    <property type="chains" value="B=101-423"/>
</dbReference>
<dbReference type="PDB" id="3UJK">
    <property type="method" value="X-ray"/>
    <property type="resolution" value="1.90 A"/>
    <property type="chains" value="A=101-423"/>
</dbReference>
<dbReference type="PDB" id="3UJL">
    <property type="method" value="X-ray"/>
    <property type="resolution" value="2.50 A"/>
    <property type="chains" value="B=101-423"/>
</dbReference>
<dbReference type="PDBsum" id="3NMV"/>
<dbReference type="PDBsum" id="3UJK"/>
<dbReference type="PDBsum" id="3UJL"/>
<dbReference type="SMR" id="O04719"/>
<dbReference type="BioGRID" id="21053">
    <property type="interactions" value="40"/>
</dbReference>
<dbReference type="DIP" id="DIP-35025N"/>
<dbReference type="FunCoup" id="O04719">
    <property type="interactions" value="372"/>
</dbReference>
<dbReference type="IntAct" id="O04719">
    <property type="interactions" value="19"/>
</dbReference>
<dbReference type="MINT" id="O04719"/>
<dbReference type="STRING" id="3702.O04719"/>
<dbReference type="iPTMnet" id="O04719"/>
<dbReference type="PaxDb" id="3702-AT5G57050.1"/>
<dbReference type="ProteomicsDB" id="250919">
    <molecule id="O04719-1"/>
</dbReference>
<dbReference type="EnsemblPlants" id="AT5G57050.1">
    <molecule id="O04719-1"/>
    <property type="protein sequence ID" value="AT5G57050.1"/>
    <property type="gene ID" value="AT5G57050"/>
</dbReference>
<dbReference type="EnsemblPlants" id="AT5G57050.2">
    <molecule id="O04719-2"/>
    <property type="protein sequence ID" value="AT5G57050.2"/>
    <property type="gene ID" value="AT5G57050"/>
</dbReference>
<dbReference type="GeneID" id="835809"/>
<dbReference type="Gramene" id="AT5G57050.1">
    <molecule id="O04719-1"/>
    <property type="protein sequence ID" value="AT5G57050.1"/>
    <property type="gene ID" value="AT5G57050"/>
</dbReference>
<dbReference type="Gramene" id="AT5G57050.2">
    <molecule id="O04719-2"/>
    <property type="protein sequence ID" value="AT5G57050.2"/>
    <property type="gene ID" value="AT5G57050"/>
</dbReference>
<dbReference type="KEGG" id="ath:AT5G57050"/>
<dbReference type="Araport" id="AT5G57050"/>
<dbReference type="TAIR" id="AT5G57050">
    <property type="gene designation" value="ABI2"/>
</dbReference>
<dbReference type="eggNOG" id="KOG0698">
    <property type="taxonomic scope" value="Eukaryota"/>
</dbReference>
<dbReference type="InParanoid" id="O04719"/>
<dbReference type="OMA" id="LFELGNM"/>
<dbReference type="OrthoDB" id="10264738at2759"/>
<dbReference type="PhylomeDB" id="O04719"/>
<dbReference type="EvolutionaryTrace" id="O04719"/>
<dbReference type="PRO" id="PR:O04719"/>
<dbReference type="Proteomes" id="UP000006548">
    <property type="component" value="Chromosome 5"/>
</dbReference>
<dbReference type="ExpressionAtlas" id="O04719">
    <property type="expression patterns" value="baseline and differential"/>
</dbReference>
<dbReference type="GO" id="GO:0046872">
    <property type="term" value="F:metal ion binding"/>
    <property type="evidence" value="ECO:0007669"/>
    <property type="project" value="UniProtKB-KW"/>
</dbReference>
<dbReference type="GO" id="GO:0004722">
    <property type="term" value="F:protein serine/threonine phosphatase activity"/>
    <property type="evidence" value="ECO:0000250"/>
    <property type="project" value="TAIR"/>
</dbReference>
<dbReference type="GO" id="GO:0009738">
    <property type="term" value="P:abscisic acid-activated signaling pathway"/>
    <property type="evidence" value="ECO:0007669"/>
    <property type="project" value="UniProtKB-KW"/>
</dbReference>
<dbReference type="GO" id="GO:0006469">
    <property type="term" value="P:negative regulation of protein kinase activity"/>
    <property type="evidence" value="ECO:0000314"/>
    <property type="project" value="TAIR"/>
</dbReference>
<dbReference type="GO" id="GO:0010205">
    <property type="term" value="P:photoinhibition"/>
    <property type="evidence" value="ECO:0000315"/>
    <property type="project" value="TAIR"/>
</dbReference>
<dbReference type="GO" id="GO:1902456">
    <property type="term" value="P:regulation of stomatal opening"/>
    <property type="evidence" value="ECO:0000315"/>
    <property type="project" value="TAIR"/>
</dbReference>
<dbReference type="GO" id="GO:0009737">
    <property type="term" value="P:response to abscisic acid"/>
    <property type="evidence" value="ECO:0000315"/>
    <property type="project" value="TAIR"/>
</dbReference>
<dbReference type="GO" id="GO:0009408">
    <property type="term" value="P:response to heat"/>
    <property type="evidence" value="ECO:0000315"/>
    <property type="project" value="TAIR"/>
</dbReference>
<dbReference type="GO" id="GO:0006970">
    <property type="term" value="P:response to osmotic stress"/>
    <property type="evidence" value="ECO:0000315"/>
    <property type="project" value="TAIR"/>
</dbReference>
<dbReference type="GO" id="GO:0009414">
    <property type="term" value="P:response to water deprivation"/>
    <property type="evidence" value="ECO:0000315"/>
    <property type="project" value="TAIR"/>
</dbReference>
<dbReference type="CDD" id="cd00143">
    <property type="entry name" value="PP2Cc"/>
    <property type="match status" value="1"/>
</dbReference>
<dbReference type="FunFam" id="3.60.40.10:FF:000025">
    <property type="entry name" value="Protein phosphatase 2C 16"/>
    <property type="match status" value="1"/>
</dbReference>
<dbReference type="Gene3D" id="3.60.40.10">
    <property type="entry name" value="PPM-type phosphatase domain"/>
    <property type="match status" value="1"/>
</dbReference>
<dbReference type="InterPro" id="IPR015655">
    <property type="entry name" value="PP2C"/>
</dbReference>
<dbReference type="InterPro" id="IPR000222">
    <property type="entry name" value="PP2C_BS"/>
</dbReference>
<dbReference type="InterPro" id="IPR036457">
    <property type="entry name" value="PPM-type-like_dom_sf"/>
</dbReference>
<dbReference type="InterPro" id="IPR001932">
    <property type="entry name" value="PPM-type_phosphatase-like_dom"/>
</dbReference>
<dbReference type="PANTHER" id="PTHR47992">
    <property type="entry name" value="PROTEIN PHOSPHATASE"/>
    <property type="match status" value="1"/>
</dbReference>
<dbReference type="Pfam" id="PF00481">
    <property type="entry name" value="PP2C"/>
    <property type="match status" value="1"/>
</dbReference>
<dbReference type="SMART" id="SM00332">
    <property type="entry name" value="PP2Cc"/>
    <property type="match status" value="1"/>
</dbReference>
<dbReference type="SUPFAM" id="SSF81606">
    <property type="entry name" value="PP2C-like"/>
    <property type="match status" value="1"/>
</dbReference>
<dbReference type="PROSITE" id="PS01032">
    <property type="entry name" value="PPM_1"/>
    <property type="match status" value="1"/>
</dbReference>
<dbReference type="PROSITE" id="PS51746">
    <property type="entry name" value="PPM_2"/>
    <property type="match status" value="1"/>
</dbReference>
<feature type="chain" id="PRO_0000057767" description="Protein phosphatase 2C 77">
    <location>
        <begin position="1"/>
        <end position="423"/>
    </location>
</feature>
<feature type="domain" description="PPM-type phosphatase" evidence="2">
    <location>
        <begin position="112"/>
        <end position="411"/>
    </location>
</feature>
<feature type="region of interest" description="Disordered" evidence="3">
    <location>
        <begin position="74"/>
        <end position="95"/>
    </location>
</feature>
<feature type="binding site" evidence="32 33 45 47">
    <location>
        <position position="165"/>
    </location>
    <ligand>
        <name>Mg(2+)</name>
        <dbReference type="ChEBI" id="CHEBI:18420"/>
        <label>1</label>
    </ligand>
</feature>
<feature type="binding site" evidence="32 33 45 46 47">
    <location>
        <position position="165"/>
    </location>
    <ligand>
        <name>Mg(2+)</name>
        <dbReference type="ChEBI" id="CHEBI:18420"/>
        <label>2</label>
    </ligand>
</feature>
<feature type="binding site" evidence="32 33 45 47">
    <location>
        <position position="251"/>
    </location>
    <ligand>
        <name>Mg(2+)</name>
        <dbReference type="ChEBI" id="CHEBI:18420"/>
        <label>1</label>
    </ligand>
</feature>
<feature type="binding site" evidence="32 33 45 47">
    <location>
        <position position="252"/>
    </location>
    <ligand>
        <name>Mg(2+)</name>
        <dbReference type="ChEBI" id="CHEBI:18420"/>
        <label>1</label>
    </ligand>
</feature>
<feature type="binding site" evidence="32 33 45 47">
    <location>
        <position position="337"/>
    </location>
    <ligand>
        <name>Mg(2+)</name>
        <dbReference type="ChEBI" id="CHEBI:18420"/>
        <label>1</label>
    </ligand>
</feature>
<feature type="binding site" evidence="32 33 45 46 47">
    <location>
        <position position="337"/>
    </location>
    <ligand>
        <name>Mg(2+)</name>
        <dbReference type="ChEBI" id="CHEBI:18420"/>
        <label>2</label>
    </ligand>
</feature>
<feature type="binding site" evidence="32 33 45 46 47">
    <location>
        <position position="402"/>
    </location>
    <ligand>
        <name>Mg(2+)</name>
        <dbReference type="ChEBI" id="CHEBI:18420"/>
        <label>2</label>
    </ligand>
</feature>
<feature type="site" description="Lock" evidence="1">
    <location>
        <position position="290"/>
    </location>
</feature>
<feature type="disulfide bond" evidence="33 47">
    <location>
        <begin position="257"/>
        <end position="331"/>
    </location>
</feature>
<feature type="splice variant" id="VSP_034834" description="In isoform 2." evidence="42">
    <location>
        <begin position="29"/>
        <end position="68"/>
    </location>
</feature>
<feature type="mutagenesis site" description="In abi2; reduced phosphatase activity, reduced affinity with magnesium ions, loss of interaction with the fibrillin precursor protein, impaired ABA-mediated binding to PYR1, and reduced negative control on fibrillin activity." evidence="24 29 38">
    <original>G</original>
    <variation>D</variation>
    <location>
        <position position="168"/>
    </location>
</feature>
<feature type="helix" evidence="48">
    <location>
        <begin position="105"/>
        <end position="108"/>
    </location>
</feature>
<feature type="strand" evidence="48">
    <location>
        <begin position="113"/>
        <end position="118"/>
    </location>
</feature>
<feature type="strand" evidence="48">
    <location>
        <begin position="122"/>
        <end position="124"/>
    </location>
</feature>
<feature type="strand" evidence="48">
    <location>
        <begin position="127"/>
        <end position="132"/>
    </location>
</feature>
<feature type="helix" evidence="48">
    <location>
        <begin position="135"/>
        <end position="139"/>
    </location>
</feature>
<feature type="helix" evidence="48">
    <location>
        <begin position="154"/>
        <end position="156"/>
    </location>
</feature>
<feature type="strand" evidence="48">
    <location>
        <begin position="159"/>
        <end position="170"/>
    </location>
</feature>
<feature type="helix" evidence="48">
    <location>
        <begin position="171"/>
        <end position="191"/>
    </location>
</feature>
<feature type="helix" evidence="48">
    <location>
        <begin position="195"/>
        <end position="197"/>
    </location>
</feature>
<feature type="helix" evidence="48">
    <location>
        <begin position="199"/>
        <end position="217"/>
    </location>
</feature>
<feature type="helix" evidence="48">
    <location>
        <begin position="220"/>
        <end position="224"/>
    </location>
</feature>
<feature type="strand" evidence="48">
    <location>
        <begin position="234"/>
        <end position="239"/>
    </location>
</feature>
<feature type="strand" evidence="48">
    <location>
        <begin position="241"/>
        <end position="251"/>
    </location>
</feature>
<feature type="strand" evidence="48">
    <location>
        <begin position="253"/>
        <end position="258"/>
    </location>
</feature>
<feature type="strand" evidence="48">
    <location>
        <begin position="261"/>
        <end position="266"/>
    </location>
</feature>
<feature type="helix" evidence="48">
    <location>
        <begin position="274"/>
        <end position="283"/>
    </location>
</feature>
<feature type="strand" evidence="48">
    <location>
        <begin position="287"/>
        <end position="295"/>
    </location>
</feature>
<feature type="turn" evidence="48">
    <location>
        <begin position="296"/>
        <end position="298"/>
    </location>
</feature>
<feature type="strand" evidence="49">
    <location>
        <begin position="299"/>
        <end position="303"/>
    </location>
</feature>
<feature type="helix" evidence="48">
    <location>
        <begin position="308"/>
        <end position="310"/>
    </location>
</feature>
<feature type="turn" evidence="48">
    <location>
        <begin position="311"/>
        <end position="313"/>
    </location>
</feature>
<feature type="strand" evidence="48">
    <location>
        <begin position="319"/>
        <end position="324"/>
    </location>
</feature>
<feature type="strand" evidence="48">
    <location>
        <begin position="329"/>
        <end position="335"/>
    </location>
</feature>
<feature type="helix" evidence="48">
    <location>
        <begin position="337"/>
        <end position="340"/>
    </location>
</feature>
<feature type="helix" evidence="48">
    <location>
        <begin position="345"/>
        <end position="361"/>
    </location>
</feature>
<feature type="helix" evidence="48">
    <location>
        <begin position="372"/>
        <end position="376"/>
    </location>
</feature>
<feature type="strand" evidence="48">
    <location>
        <begin position="378"/>
        <end position="380"/>
    </location>
</feature>
<feature type="helix" evidence="48">
    <location>
        <begin position="382"/>
        <end position="397"/>
    </location>
</feature>
<feature type="strand" evidence="48">
    <location>
        <begin position="404"/>
        <end position="410"/>
    </location>
</feature>
<name>P2C77_ARATH</name>
<proteinExistence type="evidence at protein level"/>
<protein>
    <recommendedName>
        <fullName evidence="40">Protein phosphatase 2C 77</fullName>
        <shortName evidence="40">AtPP2C77</shortName>
        <ecNumber evidence="10">3.1.3.16</ecNumber>
    </recommendedName>
    <alternativeName>
        <fullName evidence="41">Protein ABSCISIC ACID-INSENSITIVE 2</fullName>
    </alternativeName>
    <alternativeName>
        <fullName evidence="41">Protein phosphatase 2C ABI2</fullName>
        <shortName evidence="41">PP2C ABI2</shortName>
    </alternativeName>
</protein>
<reference key="1">
    <citation type="journal article" date="1997" name="Plant Cell">
        <title>The Arabidopsis ABSCISIC ACID-INSENSITIVE2 (ABI2) and ABI1 genes encode homologous protein phosphatases 2C involved in abscisic acid signal transduction.</title>
        <authorList>
            <person name="Leung J."/>
            <person name="Merlot S."/>
            <person name="Giraudat J."/>
        </authorList>
    </citation>
    <scope>NUCLEOTIDE SEQUENCE [GENOMIC DNA / MRNA]</scope>
    <scope>FUNCTION</scope>
    <scope>MUTAGENESIS OF GLY-168</scope>
    <source>
        <strain>cv. Columbia</strain>
        <strain>cv. Landsberg erecta</strain>
    </source>
</reference>
<reference key="2">
    <citation type="journal article" date="1998" name="FEBS Lett.">
        <title>ABI2, a second protein phosphatase 2C involved in abscisic acid signal transduction in Arabidopsis.</title>
        <authorList>
            <person name="Rodriguez P.L."/>
            <person name="Benning G."/>
            <person name="Grill E."/>
        </authorList>
    </citation>
    <scope>NUCLEOTIDE SEQUENCE [GENOMIC DNA]</scope>
    <source>
        <strain>cv. Landsberg erecta</strain>
    </source>
</reference>
<reference key="3">
    <citation type="journal article" date="2000" name="DNA Res.">
        <title>Structural analysis of Arabidopsis thaliana chromosome 5. X. Sequence features of the regions of 3,076,755 bp covered by sixty P1 and TAC clones.</title>
        <authorList>
            <person name="Sato S."/>
            <person name="Nakamura Y."/>
            <person name="Kaneko T."/>
            <person name="Katoh T."/>
            <person name="Asamizu E."/>
            <person name="Kotani H."/>
            <person name="Tabata S."/>
        </authorList>
    </citation>
    <scope>NUCLEOTIDE SEQUENCE [LARGE SCALE GENOMIC DNA]</scope>
    <source>
        <strain>cv. Columbia</strain>
    </source>
</reference>
<reference key="4">
    <citation type="journal article" date="2017" name="Plant J.">
        <title>Araport11: a complete reannotation of the Arabidopsis thaliana reference genome.</title>
        <authorList>
            <person name="Cheng C.Y."/>
            <person name="Krishnakumar V."/>
            <person name="Chan A.P."/>
            <person name="Thibaud-Nissen F."/>
            <person name="Schobel S."/>
            <person name="Town C.D."/>
        </authorList>
    </citation>
    <scope>GENOME REANNOTATION</scope>
    <source>
        <strain>cv. Columbia</strain>
    </source>
</reference>
<reference key="5">
    <citation type="journal article" date="2003" name="Science">
        <title>Empirical analysis of transcriptional activity in the Arabidopsis genome.</title>
        <authorList>
            <person name="Yamada K."/>
            <person name="Lim J."/>
            <person name="Dale J.M."/>
            <person name="Chen H."/>
            <person name="Shinn P."/>
            <person name="Palm C.J."/>
            <person name="Southwick A.M."/>
            <person name="Wu H.C."/>
            <person name="Kim C.J."/>
            <person name="Nguyen M."/>
            <person name="Pham P.K."/>
            <person name="Cheuk R.F."/>
            <person name="Karlin-Newmann G."/>
            <person name="Liu S.X."/>
            <person name="Lam B."/>
            <person name="Sakano H."/>
            <person name="Wu T."/>
            <person name="Yu G."/>
            <person name="Miranda M."/>
            <person name="Quach H.L."/>
            <person name="Tripp M."/>
            <person name="Chang C.H."/>
            <person name="Lee J.M."/>
            <person name="Toriumi M.J."/>
            <person name="Chan M.M."/>
            <person name="Tang C.C."/>
            <person name="Onodera C.S."/>
            <person name="Deng J.M."/>
            <person name="Akiyama K."/>
            <person name="Ansari Y."/>
            <person name="Arakawa T."/>
            <person name="Banh J."/>
            <person name="Banno F."/>
            <person name="Bowser L."/>
            <person name="Brooks S.Y."/>
            <person name="Carninci P."/>
            <person name="Chao Q."/>
            <person name="Choy N."/>
            <person name="Enju A."/>
            <person name="Goldsmith A.D."/>
            <person name="Gurjal M."/>
            <person name="Hansen N.F."/>
            <person name="Hayashizaki Y."/>
            <person name="Johnson-Hopson C."/>
            <person name="Hsuan V.W."/>
            <person name="Iida K."/>
            <person name="Karnes M."/>
            <person name="Khan S."/>
            <person name="Koesema E."/>
            <person name="Ishida J."/>
            <person name="Jiang P.X."/>
            <person name="Jones T."/>
            <person name="Kawai J."/>
            <person name="Kamiya A."/>
            <person name="Meyers C."/>
            <person name="Nakajima M."/>
            <person name="Narusaka M."/>
            <person name="Seki M."/>
            <person name="Sakurai T."/>
            <person name="Satou M."/>
            <person name="Tamse R."/>
            <person name="Vaysberg M."/>
            <person name="Wallender E.K."/>
            <person name="Wong C."/>
            <person name="Yamamura Y."/>
            <person name="Yuan S."/>
            <person name="Shinozaki K."/>
            <person name="Davis R.W."/>
            <person name="Theologis A."/>
            <person name="Ecker J.R."/>
        </authorList>
    </citation>
    <scope>NUCLEOTIDE SEQUENCE [LARGE SCALE MRNA]</scope>
    <source>
        <strain>cv. Columbia</strain>
    </source>
</reference>
<reference key="6">
    <citation type="journal article" date="1994" name="Plant Physiol.">
        <title>Maternal effects govern variable dominance of two abscisic acid response mutations in Arabidopsis thaliana.</title>
        <authorList>
            <person name="Finkelstein R.R."/>
        </authorList>
    </citation>
    <scope>FUNCTION</scope>
</reference>
<reference key="7">
    <citation type="journal article" date="1996" name="Plant Physiol.">
        <title>Abscisic acid induces the alcohol dehydrogenase gene in Arabidopsis.</title>
        <authorList>
            <person name="de Bruxelles G.L."/>
            <person name="Peacock W.J."/>
            <person name="Dennis E.S."/>
            <person name="Dolferus R."/>
        </authorList>
    </citation>
    <scope>FUNCTION</scope>
</reference>
<reference key="8">
    <citation type="journal article" date="1997" name="Mol. Gen. Genet.">
        <title>Abscisic acid-independent and abscisic acid-dependent regulation of proline biosynthesis following cold and osmotic stresses in Arabidopsis thaliana.</title>
        <authorList>
            <person name="Savoure A."/>
            <person name="Hua X.-J."/>
            <person name="Bertauche N."/>
            <person name="Van Montagu M."/>
            <person name="Verbruggen N."/>
        </authorList>
    </citation>
    <scope>FUNCTION</scope>
</reference>
<reference key="9">
    <citation type="journal article" date="1997" name="Plant Cell">
        <title>Differential abscisic acid regulation of guard cell slow anion channels in Arabidopsis wild-type and abi1 and abi2 mutants.</title>
        <authorList>
            <person name="Pei Z.-M."/>
            <person name="Kuchitsu K."/>
            <person name="Ward J.M."/>
            <person name="Schwarz M."/>
            <person name="Schroeder J.I."/>
        </authorList>
    </citation>
    <scope>FUNCTION</scope>
</reference>
<reference key="10">
    <citation type="journal article" date="1997" name="Plant Physiol.">
        <title>Convergence of the abscisic acid, CO2, and extracellular calcium signal transduction pathways in stomatal guard cells.</title>
        <authorList>
            <person name="Webb A.A.R."/>
            <person name="Hetherington A.M."/>
        </authorList>
    </citation>
    <scope>FUNCTION</scope>
</reference>
<reference key="11">
    <citation type="journal article" date="1999" name="Plant Cell">
        <title>Arabidopsis abi1-1 and abi2-1 phosphatase mutations reduce abscisic acid-induced cytoplasmic calcium rises in guard cells.</title>
        <authorList>
            <person name="Allen G.J."/>
            <person name="Kuchitsu K."/>
            <person name="Chu S.P."/>
            <person name="Murata Y."/>
            <person name="Schroeder J.I."/>
        </authorList>
    </citation>
    <scope>FUNCTION</scope>
</reference>
<reference key="12">
    <citation type="journal article" date="2000" name="Genes Dev.">
        <title>Analysis of Arabidopsis glucose insensitive mutants, gin5 and gin6, reveals a central role of the plant hormone ABA in the regulation of plant vegetative development by sugar.</title>
        <authorList>
            <person name="Arenas-Huertero F."/>
            <person name="Arroyo A."/>
            <person name="Zhou L."/>
            <person name="Sheen J."/>
            <person name="Leon P."/>
        </authorList>
    </citation>
    <scope>FUNCTION</scope>
</reference>
<reference key="13">
    <citation type="journal article" date="2000" name="Planta">
        <title>The genes ABI1 and ABI2 are involved in abscisic acid- and drought-inducible expression of the Daucus carota L. Dc3 promoter in guard cells of transgenic Arabidopsis thaliana (L.) Heynh.</title>
        <authorList>
            <person name="Chak R.K.F."/>
            <person name="Thomas T.L."/>
            <person name="Quatrano R.S."/>
            <person name="Rock C.D."/>
        </authorList>
    </citation>
    <scope>FUNCTION</scope>
</reference>
<reference key="14">
    <citation type="journal article" date="2001" name="Plant Cell">
        <title>Abscisic acid activation of plasma membrane Ca(2+) channels in guard cells requires cytosolic NAD(P)H and is differentially disrupted upstream and downstream of reactive oxygen species production in abi1-1 and abi2-1 protein phosphatase 2C mutants.</title>
        <authorList>
            <person name="Murata Y."/>
            <person name="Pei Z.-M."/>
            <person name="Mori I.C."/>
            <person name="Schroeder J."/>
        </authorList>
    </citation>
    <scope>FUNCTION</scope>
</reference>
<reference key="15">
    <citation type="journal article" date="2001" name="Plant J.">
        <title>The ABI1 and ABI2 protein phosphatases 2C act in a negative feedback regulatory loop of the abscisic acid signalling pathway.</title>
        <authorList>
            <person name="Merlot S."/>
            <person name="Gosti F."/>
            <person name="Guerrier D."/>
            <person name="Vavasseur A."/>
            <person name="Giraudat J."/>
        </authorList>
    </citation>
    <scope>FUNCTION</scope>
</reference>
<reference key="16">
    <citation type="journal article" date="2001" name="Proc. Natl. Acad. Sci. U.S.A.">
        <title>The role of ABA and the transpiration stream in the regulation of the osmotic water permeability of leaf cells.</title>
        <authorList>
            <person name="Morillon R."/>
            <person name="Chrispeels M.J."/>
        </authorList>
    </citation>
    <scope>FUNCTION</scope>
</reference>
<reference key="17">
    <citation type="journal article" date="2002" name="Dev. Cell">
        <title>A calcium sensor and its interacting protein kinase are global regulators of abscisic acid signaling in Arabidopsis.</title>
        <authorList>
            <person name="Guo Y."/>
            <person name="Xiong L."/>
            <person name="Song C.-P."/>
            <person name="Gong D."/>
            <person name="Halfter U."/>
            <person name="Zhu J.-K."/>
        </authorList>
    </citation>
    <scope>FUNCTION</scope>
    <scope>INTERACTION WITH CIPK15/PKS3</scope>
</reference>
<reference key="18">
    <citation type="journal article" date="2002" name="Planta">
        <title>The sensitivity of ABI2 to hydrogen peroxide links the abscisic acid-response regulator to redox signalling.</title>
        <authorList>
            <person name="Meinhard M."/>
            <person name="Rodriguez P.L."/>
            <person name="Grill E."/>
        </authorList>
    </citation>
    <scope>COFACTOR</scope>
    <scope>ACTIVITY REGULATION</scope>
    <scope>BIOPHYSICOCHEMICAL PROPERTIES</scope>
    <scope>CATALYTIC ACTIVITY</scope>
</reference>
<reference key="19">
    <citation type="journal article" date="2002" name="Planta">
        <title>Hydrotropism in abscisic acid, wavy, and gravitropic mutants of Arabidopsis thaliana.</title>
        <authorList>
            <person name="Takahashi N."/>
            <person name="Goto N."/>
            <person name="Okada K."/>
            <person name="Takahashi H."/>
        </authorList>
    </citation>
    <scope>FUNCTION</scope>
</reference>
<reference key="20">
    <citation type="journal article" date="2002" name="Plant Cell">
        <title>Hypersensitivity of abscisic acid-induced cytosolic calcium increases in the Arabidopsis farnesyltransferase mutant era1-2.</title>
        <authorList>
            <person name="Allen G.J."/>
            <person name="Murata Y."/>
            <person name="Chu S.P."/>
            <person name="Nafisi M."/>
            <person name="Schroeder J.I."/>
        </authorList>
    </citation>
    <scope>FUNCTION</scope>
</reference>
<reference key="21">
    <citation type="journal article" date="2003" name="FEBS Lett.">
        <title>Regulation of the ABA-sensitive Arabidopsis potassium channel gene GORK in response to water stress.</title>
        <authorList>
            <person name="Becker D."/>
            <person name="Hoth S."/>
            <person name="Ache P."/>
            <person name="Wenkel S."/>
            <person name="Roelfsema M.R.G."/>
            <person name="Meyerhoff O."/>
            <person name="Hartung W."/>
            <person name="Hedrich R."/>
        </authorList>
    </citation>
    <scope>FUNCTION</scope>
</reference>
<reference key="22">
    <citation type="journal article" date="2003" name="Plant J.">
        <title>Control of Ascorbate Peroxidase 2 expression by hydrogen peroxide and leaf water status during excess light stress reveals a functional organisation of Arabidopsis leaves.</title>
        <authorList>
            <person name="Fryer M.J."/>
            <person name="Ball L."/>
            <person name="Oxborough K."/>
            <person name="Karpinski S."/>
            <person name="Mullineaux P.M."/>
            <person name="Baker N.R."/>
        </authorList>
    </citation>
    <scope>FUNCTION</scope>
</reference>
<reference key="23">
    <citation type="journal article" date="2003" name="Proc. Natl. Acad. Sci. U.S.A.">
        <title>A novel domain in the protein kinase SOS2 mediates interaction with the protein phosphatase 2C ABI2.</title>
        <authorList>
            <person name="Ohta M."/>
            <person name="Guo Y."/>
            <person name="Halfter U."/>
            <person name="Zhu J.-K."/>
        </authorList>
    </citation>
    <scope>INTERACTION WITH CIPK24/SOS2</scope>
</reference>
<reference key="24">
    <citation type="journal article" date="2003" name="Plant Physiol.">
        <title>Synthesis of the Arabidopsis bifunctional lysine-ketoglutarate reductase/saccharopine dehydrogenase enzyme of lysine catabolism is concertedly regulated by metabolic and stress-associated signals.</title>
        <authorList>
            <person name="Stepansky A."/>
            <person name="Galili G."/>
        </authorList>
    </citation>
    <scope>FUNCTION</scope>
</reference>
<reference key="25">
    <citation type="journal article" date="2004" name="Plant J.">
        <title>Gain-of-function and loss-of-function phenotypes of the protein phosphatase 2C HAB1 reveal its role as a negative regulator of abscisic acid signalling.</title>
        <authorList>
            <person name="Saez A."/>
            <person name="Apostolova N."/>
            <person name="Gonzalez-Guzman M."/>
            <person name="Gonzalez-Garcia M.P."/>
            <person name="Nicolas C."/>
            <person name="Lorenzo O."/>
            <person name="Rodriguez P.L."/>
        </authorList>
    </citation>
    <scope>INDUCTION BY ABA</scope>
</reference>
<reference key="26">
    <citation type="journal article" date="2004" name="Trends Plant Sci.">
        <title>Plant PP2C phosphatases: emerging functions in stress signaling.</title>
        <authorList>
            <person name="Schweighofer A."/>
            <person name="Hirt H."/>
            <person name="Meskiene I."/>
        </authorList>
    </citation>
    <scope>GENE FAMILY</scope>
    <scope>NOMENCLATURE</scope>
</reference>
<reference key="27">
    <citation type="journal article" date="2005" name="Planta">
        <title>The ABI2-dependent abscisic acid signalling controls HrpN-induced drought tolerance in Arabidopsis.</title>
        <authorList>
            <person name="Dong H.-P."/>
            <person name="Yu H."/>
            <person name="Bao Z."/>
            <person name="Guo X."/>
            <person name="Peng J."/>
            <person name="Yao Z."/>
            <person name="Chen G."/>
            <person name="Qu S."/>
            <person name="Dong H."/>
        </authorList>
    </citation>
    <scope>FUNCTION</scope>
</reference>
<reference key="28">
    <citation type="journal article" date="2005" name="Plant Mol. Biol.">
        <title>Arabidopsis ERF4 is a transcriptional repressor capable of modulating ethylene and abscisic acid responses.</title>
        <authorList>
            <person name="Yang Z."/>
            <person name="Tian L."/>
            <person name="Latoszek-Green M."/>
            <person name="Brown D."/>
            <person name="Wu K."/>
        </authorList>
    </citation>
    <scope>INDUCTION BY ERF4</scope>
</reference>
<reference key="29">
    <citation type="journal article" date="2005" name="Plant Physiol.">
        <title>Heat stress phenotypes of Arabidopsis mutants implicate multiple signaling pathways in the acquisition of thermotolerance.</title>
        <authorList>
            <person name="Larkindale J."/>
            <person name="Hall J.D."/>
            <person name="Knight M.R."/>
            <person name="Vierling E."/>
        </authorList>
    </citation>
    <scope>FUNCTION</scope>
</reference>
<reference key="30">
    <citation type="journal article" date="2006" name="J. Exp. Bot.">
        <title>Role of abscisic acid (ABA) and Arabidopsis thaliana ABA-insensitive loci in low water potential-induced ABA and proline accumulation.</title>
        <authorList>
            <person name="Verslues P.E."/>
            <person name="Bray E.A."/>
        </authorList>
    </citation>
    <scope>FUNCTION</scope>
</reference>
<reference key="31">
    <citation type="journal article" date="2006" name="Plant Cell">
        <title>An Arabidopsis glutathione peroxidase functions as both a redox transducer and a scavenger in abscisic acid and drought stress responses.</title>
        <authorList>
            <person name="Miao Y."/>
            <person name="Lv D."/>
            <person name="Wang P."/>
            <person name="Wang X.-C."/>
            <person name="Chen J."/>
            <person name="Miao C."/>
            <person name="Song C.-P."/>
        </authorList>
    </citation>
    <scope>INTERACTION WITH GPX3</scope>
    <scope>REPRESSION BY OXIDIZED GPX3</scope>
</reference>
<reference key="32">
    <citation type="journal article" date="2006" name="Proc. Natl. Acad. Sci. U.S.A.">
        <title>Fibrillin expression is regulated by abscisic acid response regulators and is involved in abscisic acid-mediated photoprotection.</title>
        <authorList>
            <person name="Yang Y."/>
            <person name="Sulpice R."/>
            <person name="Himmelbach A."/>
            <person name="Meinhard M."/>
            <person name="Christmann A."/>
            <person name="Grill E."/>
        </authorList>
    </citation>
    <scope>FUNCTION</scope>
    <scope>MUTAGENESIS OF GLY-168</scope>
    <scope>INTERACTION WITH THE FIBRILLIN PRECURSOR PROTEIN</scope>
</reference>
<reference key="33">
    <citation type="journal article" date="2007" name="Development">
        <title>The role of Arabidopsis SCAR genes in ARP2-ARP3-dependent cell morphogenesis.</title>
        <authorList>
            <person name="Uhrig J.F."/>
            <person name="Mutondo M."/>
            <person name="Zimmermann I."/>
            <person name="Deeks M.J."/>
            <person name="Machesky L.M."/>
            <person name="Thomas P."/>
            <person name="Uhrig S."/>
            <person name="Rambke C."/>
            <person name="Hussey P.J."/>
            <person name="Huelskamp M."/>
        </authorList>
    </citation>
    <scope>INTERACTION WITH SPK1; SCAR1; SCAR2; SCAR3 AND SCARL</scope>
</reference>
<reference key="34">
    <citation type="journal article" date="2008" name="BMC Genomics">
        <title>Genome-wide and expression analysis of protein phosphatase 2C in rice and Arabidopsis.</title>
        <authorList>
            <person name="Xue T."/>
            <person name="Wang D."/>
            <person name="Zhang S."/>
            <person name="Ehlting J."/>
            <person name="Ni F."/>
            <person name="Jacab S."/>
            <person name="Zheng C."/>
            <person name="Zhong Y."/>
        </authorList>
    </citation>
    <scope>GENE FAMILY</scope>
    <scope>NOMENCLATURE</scope>
</reference>
<reference key="35">
    <citation type="journal article" date="2008" name="Plant Mol. Biol.">
        <title>Interaction between sugar and abscisic acid signalling during early seedling development in Arabidopsis.</title>
        <authorList>
            <person name="Dekkers B.J.W."/>
            <person name="Schuurmans J.A.M.J."/>
            <person name="Smeekens S.C.M."/>
        </authorList>
    </citation>
    <scope>FUNCTION</scope>
</reference>
<reference key="36">
    <citation type="journal article" date="2008" name="Plant Physiol.">
        <title>Overexpression of AtMYB44 enhances stomatal closure to confer abiotic stress tolerance in transgenic Arabidopsis.</title>
        <authorList>
            <person name="Jung C."/>
            <person name="Seo J.S."/>
            <person name="Han S.W."/>
            <person name="Koo Y.J."/>
            <person name="Kim C.H."/>
            <person name="Song S.I."/>
            <person name="Nahm B.H."/>
            <person name="Choi Y.D."/>
            <person name="Cheong J.-J."/>
        </authorList>
    </citation>
    <scope>INDUCTION BY MYB44 AND SALT</scope>
</reference>
<reference key="37">
    <citation type="journal article" date="2009" name="Science">
        <title>Regulators of PP2C phosphatase activity function as abscisic acid sensors.</title>
        <authorList>
            <person name="Ma Y."/>
            <person name="Szostkiewicz I."/>
            <person name="Korte A."/>
            <person name="Moes D."/>
            <person name="Yang Y."/>
            <person name="Christmann A."/>
            <person name="Grill E."/>
        </authorList>
    </citation>
    <scope>INTERACTION WITH PYL9/RCAR1</scope>
</reference>
<reference key="38">
    <citation type="journal article" date="2009" name="Science">
        <title>Abscisic acid inhibits type 2C protein phosphatases via the PYR/PYL family of START proteins.</title>
        <authorList>
            <person name="Park S.-Y."/>
            <person name="Fung P."/>
            <person name="Nishimura N."/>
            <person name="Jensen D.R."/>
            <person name="Fujii H."/>
            <person name="Zhao Y."/>
            <person name="Lumba S."/>
            <person name="Santiago J."/>
            <person name="Rodrigues A."/>
            <person name="Chow T.F."/>
            <person name="Alfred S.E."/>
            <person name="Bonetta D."/>
            <person name="Finkelstein R."/>
            <person name="Provart N.J."/>
            <person name="Desveaux D."/>
            <person name="Rodriguez P.L."/>
            <person name="McCourt P."/>
            <person name="Zhu J.-K."/>
            <person name="Schroeder J.I."/>
            <person name="Volkman B.F."/>
            <person name="Cutler S.R."/>
        </authorList>
    </citation>
    <scope>INTERACTION WITH PYR1; PYL1; PYL2; PYL3 AND PYL4</scope>
    <scope>ACTIVITY REGULATION</scope>
    <scope>MUTAGENESIS OF GLY-168</scope>
</reference>
<reference key="39">
    <citation type="journal article" date="2010" name="Plant J.">
        <title>Closely related receptor complexes differ in their ABA selectivity and sensitivity.</title>
        <authorList>
            <person name="Szostkiewicz I."/>
            <person name="Richter K."/>
            <person name="Kepka M."/>
            <person name="Demmel S."/>
            <person name="Ma Y."/>
            <person name="Korte A."/>
            <person name="Assaad F.F."/>
            <person name="Christmann A."/>
            <person name="Grill E."/>
        </authorList>
    </citation>
    <scope>INTERACTION WITH PYL8/RCAR3</scope>
    <scope>ACTIVITY REGULATION BY PYR/PYL/RCAR</scope>
</reference>
<reference key="40">
    <citation type="journal article" date="2012" name="Plant Cell">
        <title>A plasma membrane receptor kinase, GHR1, mediates abscisic acid- and hydrogen peroxide-regulated stomatal movement in Arabidopsis.</title>
        <authorList>
            <person name="Hua D."/>
            <person name="Wang C."/>
            <person name="He J."/>
            <person name="Liao H."/>
            <person name="Duan Y."/>
            <person name="Zhu Z."/>
            <person name="Guo Y."/>
            <person name="Chen Z."/>
            <person name="Gong Z."/>
        </authorList>
    </citation>
    <scope>FUNCTION</scope>
    <scope>INTERACTION WITH GHR1 AND SRK2E/OST1</scope>
</reference>
<reference key="41">
    <citation type="journal article" date="2010" name="Nat. Struct. Mol. Biol.">
        <title>Identification and mechanism of ABA receptor antagonism.</title>
        <authorList>
            <person name="Melcher K."/>
            <person name="Xu Y."/>
            <person name="Ng L.-M."/>
            <person name="Zhou X.E."/>
            <person name="Soon F.-F."/>
            <person name="Chinnusamy V."/>
            <person name="Suino-Powell K.M."/>
            <person name="Kovach A."/>
            <person name="Tham F.S."/>
            <person name="Cutler S.R."/>
            <person name="Li J."/>
            <person name="Yong E.-L."/>
            <person name="Zhu J.-K."/>
            <person name="Xu H.E."/>
        </authorList>
    </citation>
    <scope>X-RAY CRYSTALLOGRAPHY (2.10 ANGSTROMS) OF 101-423 IN COMPLEX WITH MAGNESIUM</scope>
</reference>
<reference key="42">
    <citation type="journal article" date="2012" name="Science">
        <title>Molecular mimicry regulates ABA signaling by SnRK2 kinases and PP2C phosphatases.</title>
        <authorList>
            <person name="Soon F.F."/>
            <person name="Ng L.M."/>
            <person name="Zhou X.E."/>
            <person name="West G.M."/>
            <person name="Kovach A."/>
            <person name="Tan M.H."/>
            <person name="Suino-Powell K.M."/>
            <person name="He Y."/>
            <person name="Xu Y."/>
            <person name="Chalmers M.J."/>
            <person name="Brunzelle J.S."/>
            <person name="Zhang H."/>
            <person name="Yang H."/>
            <person name="Jiang H."/>
            <person name="Li J."/>
            <person name="Yong E.L."/>
            <person name="Cutler S."/>
            <person name="Zhu J.K."/>
            <person name="Griffin P.R."/>
            <person name="Melcher K."/>
            <person name="Xu H.E."/>
        </authorList>
    </citation>
    <scope>X-RAY CRYSTALLOGRAPHY (1.90 ANGSTROMS) OF 101-423 IN COMPLEX WITH MAGNESIUM</scope>
    <scope>DISULFIDE BONDS</scope>
</reference>
<gene>
    <name evidence="41" type="primary">ABI2</name>
    <name evidence="40" type="synonym">PP2C77</name>
    <name evidence="43" type="ordered locus">At5g57050</name>
    <name evidence="44" type="ORF">MHM17.19</name>
</gene>
<comment type="function">
    <text evidence="4 5 6 7 8 9 11 12 13 14 15 17 18 20 21 23 24 28 34 35 36 37 38 39">Repressor of the abscisic acid (ABA) signaling pathway that regulates numerous ABA responses, such as stomatal closure, osmotic water permeability of the plasma membrane (Pos), high light stress, response to glucose, seed germination and inhibition of vegetative growth. During the stomatal closure regulation, modulates the inward calcium-channel permeability as well as H(2)O(2) and oxidative burst in response to ABA and dehydration. Represses GHR1 and, to some extent, SRK2E/OST1, kinases involved in the regulation of SLAC1-dependent stomatal closure (PubMed:22730405). Controls negatively fibrillin that is involved in mediating ABA-induced photoprotection. May be implicated in ABA content regulation. Involved in acquired thermotolerance of root growth and seedling survival. Required for the Erwinia amylovora harpin-induced (HrpN) drought tolerance. Involved in the hydrotropic response.</text>
</comment>
<comment type="catalytic activity">
    <reaction evidence="10">
        <text>O-phospho-L-seryl-[protein] + H2O = L-seryl-[protein] + phosphate</text>
        <dbReference type="Rhea" id="RHEA:20629"/>
        <dbReference type="Rhea" id="RHEA-COMP:9863"/>
        <dbReference type="Rhea" id="RHEA-COMP:11604"/>
        <dbReference type="ChEBI" id="CHEBI:15377"/>
        <dbReference type="ChEBI" id="CHEBI:29999"/>
        <dbReference type="ChEBI" id="CHEBI:43474"/>
        <dbReference type="ChEBI" id="CHEBI:83421"/>
        <dbReference type="EC" id="3.1.3.16"/>
    </reaction>
</comment>
<comment type="catalytic activity">
    <reaction evidence="10">
        <text>O-phospho-L-threonyl-[protein] + H2O = L-threonyl-[protein] + phosphate</text>
        <dbReference type="Rhea" id="RHEA:47004"/>
        <dbReference type="Rhea" id="RHEA-COMP:11060"/>
        <dbReference type="Rhea" id="RHEA-COMP:11605"/>
        <dbReference type="ChEBI" id="CHEBI:15377"/>
        <dbReference type="ChEBI" id="CHEBI:30013"/>
        <dbReference type="ChEBI" id="CHEBI:43474"/>
        <dbReference type="ChEBI" id="CHEBI:61977"/>
        <dbReference type="EC" id="3.1.3.16"/>
    </reaction>
</comment>
<comment type="cofactor">
    <cofactor evidence="10 32 33">
        <name>Mg(2+)</name>
        <dbReference type="ChEBI" id="CHEBI:18420"/>
    </cofactor>
    <cofactor evidence="10">
        <name>Mn(2+)</name>
        <dbReference type="ChEBI" id="CHEBI:29035"/>
    </cofactor>
    <text evidence="10 32 33">Binds 2 magnesium or manganese ions per subunit.</text>
</comment>
<comment type="activity regulation">
    <text evidence="10 29 31">Phosphatase activity repressed by oxidized ATGPX3, free fatty acids (e.g. arachidonic acid (20:4) and Linolenic acid (18:3)) and by H(2)O(2). Repressed by PYR/PYL/RCAR ABA receptors in an ABA-dependent manner.</text>
</comment>
<comment type="biophysicochemical properties">
    <phDependence>
        <text evidence="10">Optimum pH is 8.</text>
    </phDependence>
</comment>
<comment type="subunit">
    <text evidence="12 16 24 25 26 29 30 31 34">Interacts with SPK1, CIPK15/PKS3, GPX3, SCAR1, SCAR2, SCAR3 and SCARL. Also interacts with CIPK24/SOS2. Binds to the fibrillin precursor protein. Interacts with ABA-bounded PYR1, PYL1, PYL2, PYL3, PYL4, PYL5, PYL6, PYL8 and PYL9, and with free PYL2, PYL3 and PYL4. Interacts with and represses GHR1, and, to a lesser extent, SRK2E/OST1 (PubMed:22730405).</text>
</comment>
<comment type="interaction">
    <interactant intactId="EBI-537680">
        <id>O04719</id>
    </interactant>
    <interactant intactId="EBI-537551">
        <id>Q9LDI3</id>
        <label>CIPK24</label>
    </interactant>
    <organismsDiffer>false</organismsDiffer>
    <experiments>4</experiments>
</comment>
<comment type="interaction">
    <interactant intactId="EBI-537680">
        <id>O04719</id>
    </interactant>
    <interactant intactId="EBI-962363">
        <id>O81439</id>
        <label>PAP1</label>
    </interactant>
    <organismsDiffer>false</organismsDiffer>
    <experiments>5</experiments>
</comment>
<comment type="interaction">
    <interactant intactId="EBI-537680">
        <id>O04719</id>
    </interactant>
    <interactant intactId="EBI-2363213">
        <id>Q8H1R0</id>
        <label>PYL10</label>
    </interactant>
    <organismsDiffer>false</organismsDiffer>
    <experiments>3</experiments>
</comment>
<comment type="interaction">
    <interactant intactId="EBI-537680">
        <id>O04719</id>
    </interactant>
    <interactant intactId="EBI-2363181">
        <id>Q9FLB1</id>
        <label>PYL5</label>
    </interactant>
    <organismsDiffer>false</organismsDiffer>
    <experiments>4</experiments>
</comment>
<comment type="interaction">
    <interactant intactId="EBI-537680">
        <id>O04719</id>
    </interactant>
    <interactant intactId="EBI-2363192">
        <id>Q8S8E3</id>
        <label>PYL6</label>
    </interactant>
    <organismsDiffer>false</organismsDiffer>
    <experiments>4</experiments>
</comment>
<comment type="interaction">
    <interactant intactId="EBI-537680">
        <id>O04719</id>
    </interactant>
    <interactant intactId="EBI-2429535">
        <id>Q9FGM1</id>
        <label>PYL8</label>
    </interactant>
    <organismsDiffer>false</organismsDiffer>
    <experiments>3</experiments>
</comment>
<comment type="interaction">
    <interactant intactId="EBI-537680">
        <id>O04719</id>
    </interactant>
    <interactant intactId="EBI-2349513">
        <id>Q84MC7</id>
        <label>PYL9</label>
    </interactant>
    <organismsDiffer>false</organismsDiffer>
    <experiments>7</experiments>
</comment>
<comment type="interaction">
    <interactant intactId="EBI-537680">
        <id>O04719</id>
    </interactant>
    <interactant intactId="EBI-2349590">
        <id>O49686</id>
        <label>PYR1</label>
    </interactant>
    <organismsDiffer>false</organismsDiffer>
    <experiments>3</experiments>
</comment>
<comment type="interaction">
    <interactant intactId="EBI-537680">
        <id>O04719</id>
    </interactant>
    <interactant intactId="EBI-1102271">
        <id>Q84JG2</id>
        <label>SWI3B</label>
    </interactant>
    <organismsDiffer>false</organismsDiffer>
    <experiments>2</experiments>
</comment>
<comment type="interaction">
    <interactant intactId="EBI-15803514">
        <id>O04719-1</id>
    </interactant>
    <interactant intactId="EBI-2363104">
        <id>Q8VZS8</id>
        <label>PYL1</label>
    </interactant>
    <organismsDiffer>false</organismsDiffer>
    <experiments>2</experiments>
</comment>
<comment type="interaction">
    <interactant intactId="EBI-15803514">
        <id>O04719-1</id>
    </interactant>
    <interactant intactId="EBI-2363125">
        <id>O80992</id>
        <label>PYL2</label>
    </interactant>
    <organismsDiffer>false</organismsDiffer>
    <experiments>3</experiments>
</comment>
<comment type="interaction">
    <interactant intactId="EBI-15803514">
        <id>O04719-1</id>
    </interactant>
    <interactant intactId="EBI-2363144">
        <id>Q9SSM7</id>
        <label>PYL3</label>
    </interactant>
    <organismsDiffer>false</organismsDiffer>
    <experiments>2</experiments>
</comment>
<comment type="interaction">
    <interactant intactId="EBI-15803514">
        <id>O04719-1</id>
    </interactant>
    <interactant intactId="EBI-2349683">
        <id>O80920</id>
        <label>PYL4</label>
    </interactant>
    <organismsDiffer>false</organismsDiffer>
    <experiments>2</experiments>
</comment>
<comment type="interaction">
    <interactant intactId="EBI-15803514">
        <id>O04719-1</id>
    </interactant>
    <interactant intactId="EBI-2363181">
        <id>Q9FLB1</id>
        <label>PYL5</label>
    </interactant>
    <organismsDiffer>false</organismsDiffer>
    <experiments>2</experiments>
</comment>
<comment type="interaction">
    <interactant intactId="EBI-15803514">
        <id>O04719-1</id>
    </interactant>
    <interactant intactId="EBI-2363192">
        <id>Q8S8E3</id>
        <label>PYL6</label>
    </interactant>
    <organismsDiffer>false</organismsDiffer>
    <experiments>2</experiments>
</comment>
<comment type="interaction">
    <interactant intactId="EBI-15803514">
        <id>O04719-1</id>
    </interactant>
    <interactant intactId="EBI-2349590">
        <id>O49686</id>
        <label>PYR1</label>
    </interactant>
    <organismsDiffer>false</organismsDiffer>
    <experiments>2</experiments>
</comment>
<comment type="interaction">
    <interactant intactId="EBI-15803514">
        <id>O04719-1</id>
    </interactant>
    <interactant intactId="EBI-2363308">
        <id>Q39192</id>
        <label>SRK2D</label>
    </interactant>
    <organismsDiffer>false</organismsDiffer>
    <experiments>2</experiments>
</comment>
<comment type="interaction">
    <interactant intactId="EBI-15803514">
        <id>O04719-1</id>
    </interactant>
    <interactant intactId="EBI-782514">
        <id>Q940H6</id>
        <label>SRK2E</label>
    </interactant>
    <organismsDiffer>false</organismsDiffer>
    <experiments>5</experiments>
</comment>
<comment type="interaction">
    <interactant intactId="EBI-15803514">
        <id>O04719-1</id>
    </interactant>
    <interactant intactId="EBI-2620383">
        <id>Q39193</id>
        <label>SRK2I</label>
    </interactant>
    <organismsDiffer>false</organismsDiffer>
    <experiments>2</experiments>
</comment>
<comment type="alternative products">
    <event type="alternative splicing"/>
    <isoform>
        <id>O04719-1</id>
        <name>1</name>
        <sequence type="displayed"/>
    </isoform>
    <isoform>
        <id>O04719-2</id>
        <name>2</name>
        <sequence type="described" ref="VSP_034834"/>
    </isoform>
</comment>
<comment type="induction">
    <text evidence="19 22 25 27">Repressed by MYB44 and ERF4. Induced by salt stress and ABA.</text>
</comment>
<comment type="domain">
    <text evidence="1">The 'lock' site stabilizes the complex made of PP2C, ABA and PYR/PYL/RCAR receptor by keeping receptor 'gate' and 'latch' loops in closed positions.</text>
</comment>
<comment type="miscellaneous">
    <text>The reduced form of ABI2 is converted to the oxidized form by the addition of oxidized GPX3 or H(2)O(2).</text>
</comment>
<comment type="similarity">
    <text evidence="42">Belongs to the PP2C family.</text>
</comment>
<evidence type="ECO:0000250" key="1">
    <source>
        <dbReference type="UniProtKB" id="Q9CAJ0"/>
    </source>
</evidence>
<evidence type="ECO:0000255" key="2">
    <source>
        <dbReference type="PROSITE-ProRule" id="PRU01082"/>
    </source>
</evidence>
<evidence type="ECO:0000256" key="3">
    <source>
        <dbReference type="SAM" id="MobiDB-lite"/>
    </source>
</evidence>
<evidence type="ECO:0000269" key="4">
    <source>
    </source>
</evidence>
<evidence type="ECO:0000269" key="5">
    <source>
    </source>
</evidence>
<evidence type="ECO:0000269" key="6">
    <source>
    </source>
</evidence>
<evidence type="ECO:0000269" key="7">
    <source>
    </source>
</evidence>
<evidence type="ECO:0000269" key="8">
    <source>
    </source>
</evidence>
<evidence type="ECO:0000269" key="9">
    <source>
    </source>
</evidence>
<evidence type="ECO:0000269" key="10">
    <source>
    </source>
</evidence>
<evidence type="ECO:0000269" key="11">
    <source>
    </source>
</evidence>
<evidence type="ECO:0000269" key="12">
    <source>
    </source>
</evidence>
<evidence type="ECO:0000269" key="13">
    <source>
    </source>
</evidence>
<evidence type="ECO:0000269" key="14">
    <source>
    </source>
</evidence>
<evidence type="ECO:0000269" key="15">
    <source>
    </source>
</evidence>
<evidence type="ECO:0000269" key="16">
    <source>
    </source>
</evidence>
<evidence type="ECO:0000269" key="17">
    <source>
    </source>
</evidence>
<evidence type="ECO:0000269" key="18">
    <source>
    </source>
</evidence>
<evidence type="ECO:0000269" key="19">
    <source>
    </source>
</evidence>
<evidence type="ECO:0000269" key="20">
    <source>
    </source>
</evidence>
<evidence type="ECO:0000269" key="21">
    <source>
    </source>
</evidence>
<evidence type="ECO:0000269" key="22">
    <source>
    </source>
</evidence>
<evidence type="ECO:0000269" key="23">
    <source>
    </source>
</evidence>
<evidence type="ECO:0000269" key="24">
    <source>
    </source>
</evidence>
<evidence type="ECO:0000269" key="25">
    <source>
    </source>
</evidence>
<evidence type="ECO:0000269" key="26">
    <source>
    </source>
</evidence>
<evidence type="ECO:0000269" key="27">
    <source>
    </source>
</evidence>
<evidence type="ECO:0000269" key="28">
    <source>
    </source>
</evidence>
<evidence type="ECO:0000269" key="29">
    <source>
    </source>
</evidence>
<evidence type="ECO:0000269" key="30">
    <source>
    </source>
</evidence>
<evidence type="ECO:0000269" key="31">
    <source>
    </source>
</evidence>
<evidence type="ECO:0000269" key="32">
    <source>
    </source>
</evidence>
<evidence type="ECO:0000269" key="33">
    <source>
    </source>
</evidence>
<evidence type="ECO:0000269" key="34">
    <source>
    </source>
</evidence>
<evidence type="ECO:0000269" key="35">
    <source>
    </source>
</evidence>
<evidence type="ECO:0000269" key="36">
    <source>
    </source>
</evidence>
<evidence type="ECO:0000269" key="37">
    <source>
    </source>
</evidence>
<evidence type="ECO:0000269" key="38">
    <source>
    </source>
</evidence>
<evidence type="ECO:0000269" key="39">
    <source>
    </source>
</evidence>
<evidence type="ECO:0000303" key="40">
    <source>
    </source>
</evidence>
<evidence type="ECO:0000303" key="41">
    <source>
    </source>
</evidence>
<evidence type="ECO:0000305" key="42"/>
<evidence type="ECO:0000312" key="43">
    <source>
        <dbReference type="Araport" id="AT5G57050"/>
    </source>
</evidence>
<evidence type="ECO:0000312" key="44">
    <source>
        <dbReference type="EMBL" id="BAA97035.1"/>
    </source>
</evidence>
<evidence type="ECO:0007744" key="45">
    <source>
        <dbReference type="PDB" id="3NMV"/>
    </source>
</evidence>
<evidence type="ECO:0007744" key="46">
    <source>
        <dbReference type="PDB" id="3UJK"/>
    </source>
</evidence>
<evidence type="ECO:0007744" key="47">
    <source>
        <dbReference type="PDB" id="3UJL"/>
    </source>
</evidence>
<evidence type="ECO:0007829" key="48">
    <source>
        <dbReference type="PDB" id="3UJK"/>
    </source>
</evidence>
<evidence type="ECO:0007829" key="49">
    <source>
        <dbReference type="PDB" id="3UJL"/>
    </source>
</evidence>
<accession>O04719</accession>
<accession>B3H561</accession>
<organism>
    <name type="scientific">Arabidopsis thaliana</name>
    <name type="common">Mouse-ear cress</name>
    <dbReference type="NCBI Taxonomy" id="3702"/>
    <lineage>
        <taxon>Eukaryota</taxon>
        <taxon>Viridiplantae</taxon>
        <taxon>Streptophyta</taxon>
        <taxon>Embryophyta</taxon>
        <taxon>Tracheophyta</taxon>
        <taxon>Spermatophyta</taxon>
        <taxon>Magnoliopsida</taxon>
        <taxon>eudicotyledons</taxon>
        <taxon>Gunneridae</taxon>
        <taxon>Pentapetalae</taxon>
        <taxon>rosids</taxon>
        <taxon>malvids</taxon>
        <taxon>Brassicales</taxon>
        <taxon>Brassicaceae</taxon>
        <taxon>Camelineae</taxon>
        <taxon>Arabidopsis</taxon>
    </lineage>
</organism>
<sequence>MDEVSPAVAVPFRPFTDPHAGLRGYCNGESRVTLPESSCSGDGAMKDSSFEINTRQDSLTSSSSAMAGVDISAGDEINGSDEFDPRSMNQSEKKVLSRTESRSLFEFKCVPLYGVTSICGRRPEMEDSVSTIPRFLQVSSSSLLDGRVTNGFNPHLSAHFFGVYDGHGGSQVANYCRERMHLALTEEIVKEKPEFCDGDTWQEKWKKALFNSFMRVDSEIETVAHAPETVGSTSVVAVVFPTHIFVANCGDSRAVLCRGKTPLALSVDHKPDRDDEAARIEAAGGKVIRWNGARVFGVLAMSRSIGDRYLKPSVIPDPEVTSVRRVKEDDCLILASDGLWDVMTNEEVCDLARKRILLWHKKNAMAGEALLPAEKRGEGKDPAAMSAAEYLSKMALQKGSKDNISVVVVDLKGIRKFKSKSLN</sequence>